<evidence type="ECO:0000255" key="1">
    <source>
        <dbReference type="HAMAP-Rule" id="MF_00372"/>
    </source>
</evidence>
<feature type="chain" id="PRO_1000133888" description="Imidazolonepropionase">
    <location>
        <begin position="1"/>
        <end position="402"/>
    </location>
</feature>
<feature type="binding site" evidence="1">
    <location>
        <position position="66"/>
    </location>
    <ligand>
        <name>Fe(3+)</name>
        <dbReference type="ChEBI" id="CHEBI:29034"/>
    </ligand>
</feature>
<feature type="binding site" evidence="1">
    <location>
        <position position="66"/>
    </location>
    <ligand>
        <name>Zn(2+)</name>
        <dbReference type="ChEBI" id="CHEBI:29105"/>
    </ligand>
</feature>
<feature type="binding site" evidence="1">
    <location>
        <position position="68"/>
    </location>
    <ligand>
        <name>Fe(3+)</name>
        <dbReference type="ChEBI" id="CHEBI:29034"/>
    </ligand>
</feature>
<feature type="binding site" evidence="1">
    <location>
        <position position="68"/>
    </location>
    <ligand>
        <name>Zn(2+)</name>
        <dbReference type="ChEBI" id="CHEBI:29105"/>
    </ligand>
</feature>
<feature type="binding site" evidence="1">
    <location>
        <position position="75"/>
    </location>
    <ligand>
        <name>4-imidazolone-5-propanoate</name>
        <dbReference type="ChEBI" id="CHEBI:77893"/>
    </ligand>
</feature>
<feature type="binding site" evidence="1">
    <location>
        <position position="138"/>
    </location>
    <ligand>
        <name>4-imidazolone-5-propanoate</name>
        <dbReference type="ChEBI" id="CHEBI:77893"/>
    </ligand>
</feature>
<feature type="binding site" evidence="1">
    <location>
        <position position="138"/>
    </location>
    <ligand>
        <name>N-formimidoyl-L-glutamate</name>
        <dbReference type="ChEBI" id="CHEBI:58928"/>
    </ligand>
</feature>
<feature type="binding site" evidence="1">
    <location>
        <position position="171"/>
    </location>
    <ligand>
        <name>4-imidazolone-5-propanoate</name>
        <dbReference type="ChEBI" id="CHEBI:77893"/>
    </ligand>
</feature>
<feature type="binding site" evidence="1">
    <location>
        <position position="236"/>
    </location>
    <ligand>
        <name>Fe(3+)</name>
        <dbReference type="ChEBI" id="CHEBI:29034"/>
    </ligand>
</feature>
<feature type="binding site" evidence="1">
    <location>
        <position position="236"/>
    </location>
    <ligand>
        <name>Zn(2+)</name>
        <dbReference type="ChEBI" id="CHEBI:29105"/>
    </ligand>
</feature>
<feature type="binding site" evidence="1">
    <location>
        <position position="239"/>
    </location>
    <ligand>
        <name>4-imidazolone-5-propanoate</name>
        <dbReference type="ChEBI" id="CHEBI:77893"/>
    </ligand>
</feature>
<feature type="binding site" evidence="1">
    <location>
        <position position="311"/>
    </location>
    <ligand>
        <name>Fe(3+)</name>
        <dbReference type="ChEBI" id="CHEBI:29034"/>
    </ligand>
</feature>
<feature type="binding site" evidence="1">
    <location>
        <position position="311"/>
    </location>
    <ligand>
        <name>Zn(2+)</name>
        <dbReference type="ChEBI" id="CHEBI:29105"/>
    </ligand>
</feature>
<feature type="binding site" evidence="1">
    <location>
        <position position="313"/>
    </location>
    <ligand>
        <name>N-formimidoyl-L-glutamate</name>
        <dbReference type="ChEBI" id="CHEBI:58928"/>
    </ligand>
</feature>
<feature type="binding site" evidence="1">
    <location>
        <position position="315"/>
    </location>
    <ligand>
        <name>N-formimidoyl-L-glutamate</name>
        <dbReference type="ChEBI" id="CHEBI:58928"/>
    </ligand>
</feature>
<feature type="binding site" evidence="1">
    <location>
        <position position="316"/>
    </location>
    <ligand>
        <name>4-imidazolone-5-propanoate</name>
        <dbReference type="ChEBI" id="CHEBI:77893"/>
    </ligand>
</feature>
<name>HUTI_VIBCM</name>
<dbReference type="EC" id="3.5.2.7" evidence="1"/>
<dbReference type="EMBL" id="CP001233">
    <property type="protein sequence ID" value="ACP05477.1"/>
    <property type="molecule type" value="Genomic_DNA"/>
</dbReference>
<dbReference type="RefSeq" id="WP_000995897.1">
    <property type="nucleotide sequence ID" value="NC_012578.1"/>
</dbReference>
<dbReference type="SMR" id="C3LLQ1"/>
<dbReference type="KEGG" id="vcm:VCM66_1160"/>
<dbReference type="HOGENOM" id="CLU_041647_0_0_6"/>
<dbReference type="UniPathway" id="UPA00379">
    <property type="reaction ID" value="UER00551"/>
</dbReference>
<dbReference type="Proteomes" id="UP000001217">
    <property type="component" value="Chromosome I"/>
</dbReference>
<dbReference type="GO" id="GO:0005737">
    <property type="term" value="C:cytoplasm"/>
    <property type="evidence" value="ECO:0007669"/>
    <property type="project" value="UniProtKB-SubCell"/>
</dbReference>
<dbReference type="GO" id="GO:0050480">
    <property type="term" value="F:imidazolonepropionase activity"/>
    <property type="evidence" value="ECO:0007669"/>
    <property type="project" value="UniProtKB-UniRule"/>
</dbReference>
<dbReference type="GO" id="GO:0005506">
    <property type="term" value="F:iron ion binding"/>
    <property type="evidence" value="ECO:0007669"/>
    <property type="project" value="UniProtKB-UniRule"/>
</dbReference>
<dbReference type="GO" id="GO:0008270">
    <property type="term" value="F:zinc ion binding"/>
    <property type="evidence" value="ECO:0007669"/>
    <property type="project" value="UniProtKB-UniRule"/>
</dbReference>
<dbReference type="GO" id="GO:0019556">
    <property type="term" value="P:L-histidine catabolic process to glutamate and formamide"/>
    <property type="evidence" value="ECO:0007669"/>
    <property type="project" value="UniProtKB-UniPathway"/>
</dbReference>
<dbReference type="GO" id="GO:0019557">
    <property type="term" value="P:L-histidine catabolic process to glutamate and formate"/>
    <property type="evidence" value="ECO:0007669"/>
    <property type="project" value="UniProtKB-UniPathway"/>
</dbReference>
<dbReference type="CDD" id="cd01296">
    <property type="entry name" value="Imidazolone-5PH"/>
    <property type="match status" value="1"/>
</dbReference>
<dbReference type="FunFam" id="3.20.20.140:FF:000007">
    <property type="entry name" value="Imidazolonepropionase"/>
    <property type="match status" value="1"/>
</dbReference>
<dbReference type="Gene3D" id="3.20.20.140">
    <property type="entry name" value="Metal-dependent hydrolases"/>
    <property type="match status" value="1"/>
</dbReference>
<dbReference type="Gene3D" id="2.30.40.10">
    <property type="entry name" value="Urease, subunit C, domain 1"/>
    <property type="match status" value="1"/>
</dbReference>
<dbReference type="HAMAP" id="MF_00372">
    <property type="entry name" value="HutI"/>
    <property type="match status" value="1"/>
</dbReference>
<dbReference type="InterPro" id="IPR006680">
    <property type="entry name" value="Amidohydro-rel"/>
</dbReference>
<dbReference type="InterPro" id="IPR005920">
    <property type="entry name" value="HutI"/>
</dbReference>
<dbReference type="InterPro" id="IPR011059">
    <property type="entry name" value="Metal-dep_hydrolase_composite"/>
</dbReference>
<dbReference type="InterPro" id="IPR032466">
    <property type="entry name" value="Metal_Hydrolase"/>
</dbReference>
<dbReference type="NCBIfam" id="TIGR01224">
    <property type="entry name" value="hutI"/>
    <property type="match status" value="1"/>
</dbReference>
<dbReference type="PANTHER" id="PTHR42752">
    <property type="entry name" value="IMIDAZOLONEPROPIONASE"/>
    <property type="match status" value="1"/>
</dbReference>
<dbReference type="PANTHER" id="PTHR42752:SF1">
    <property type="entry name" value="IMIDAZOLONEPROPIONASE-RELATED"/>
    <property type="match status" value="1"/>
</dbReference>
<dbReference type="Pfam" id="PF01979">
    <property type="entry name" value="Amidohydro_1"/>
    <property type="match status" value="1"/>
</dbReference>
<dbReference type="SUPFAM" id="SSF51338">
    <property type="entry name" value="Composite domain of metallo-dependent hydrolases"/>
    <property type="match status" value="1"/>
</dbReference>
<dbReference type="SUPFAM" id="SSF51556">
    <property type="entry name" value="Metallo-dependent hydrolases"/>
    <property type="match status" value="1"/>
</dbReference>
<sequence length="402" mass="43710">MNCVLTEARLVTMQPGVQGYQITEPQTLIIEQGRIQHIGQHIDLPSDAHPISCAGKLVTPGLIDCHTHLVYAGSRANEFELRLQGVPYQTIAAQGGGILSTVNATRKASEEALIELALPRLDGLLRSGVTSVEVKSGYGLTLKDELKMLRAAKALEQHRRVKITTTLLAAHALPPEFQGRSDDYIAHICQEIIPRVAEEQLATSVDVFCESIGFSVAQTERVFHAAQAHGLQIKGHTEQLSNLGGSALTARMGGLSVDHIEYLDEAGVKALAQSSTVATLLPGAFYFLRETQKPPIEWLRQYRVPMAISTDLNPGTSPFADLSLMMNMGCTLFDLTPEETLRAVTCHAAQALGYPANRGQIAEGYDADLAIWNIEHPAELSYQVGVSRLHARIVNGELSYES</sequence>
<gene>
    <name evidence="1" type="primary">hutI</name>
    <name type="ordered locus">VCM66_1160</name>
</gene>
<organism>
    <name type="scientific">Vibrio cholerae serotype O1 (strain M66-2)</name>
    <dbReference type="NCBI Taxonomy" id="579112"/>
    <lineage>
        <taxon>Bacteria</taxon>
        <taxon>Pseudomonadati</taxon>
        <taxon>Pseudomonadota</taxon>
        <taxon>Gammaproteobacteria</taxon>
        <taxon>Vibrionales</taxon>
        <taxon>Vibrionaceae</taxon>
        <taxon>Vibrio</taxon>
    </lineage>
</organism>
<keyword id="KW-0963">Cytoplasm</keyword>
<keyword id="KW-0369">Histidine metabolism</keyword>
<keyword id="KW-0378">Hydrolase</keyword>
<keyword id="KW-0408">Iron</keyword>
<keyword id="KW-0479">Metal-binding</keyword>
<keyword id="KW-0862">Zinc</keyword>
<proteinExistence type="inferred from homology"/>
<reference key="1">
    <citation type="journal article" date="2008" name="PLoS ONE">
        <title>A recalibrated molecular clock and independent origins for the cholera pandemic clones.</title>
        <authorList>
            <person name="Feng L."/>
            <person name="Reeves P.R."/>
            <person name="Lan R."/>
            <person name="Ren Y."/>
            <person name="Gao C."/>
            <person name="Zhou Z."/>
            <person name="Ren Y."/>
            <person name="Cheng J."/>
            <person name="Wang W."/>
            <person name="Wang J."/>
            <person name="Qian W."/>
            <person name="Li D."/>
            <person name="Wang L."/>
        </authorList>
    </citation>
    <scope>NUCLEOTIDE SEQUENCE [LARGE SCALE GENOMIC DNA]</scope>
    <source>
        <strain>M66-2</strain>
    </source>
</reference>
<accession>C3LLQ1</accession>
<comment type="function">
    <text evidence="1">Catalyzes the hydrolytic cleavage of the carbon-nitrogen bond in imidazolone-5-propanoate to yield N-formimidoyl-L-glutamate. It is the third step in the universal histidine degradation pathway.</text>
</comment>
<comment type="catalytic activity">
    <reaction evidence="1">
        <text>4-imidazolone-5-propanoate + H2O = N-formimidoyl-L-glutamate</text>
        <dbReference type="Rhea" id="RHEA:23660"/>
        <dbReference type="ChEBI" id="CHEBI:15377"/>
        <dbReference type="ChEBI" id="CHEBI:58928"/>
        <dbReference type="ChEBI" id="CHEBI:77893"/>
        <dbReference type="EC" id="3.5.2.7"/>
    </reaction>
</comment>
<comment type="cofactor">
    <cofactor evidence="1">
        <name>Zn(2+)</name>
        <dbReference type="ChEBI" id="CHEBI:29105"/>
    </cofactor>
    <cofactor evidence="1">
        <name>Fe(3+)</name>
        <dbReference type="ChEBI" id="CHEBI:29034"/>
    </cofactor>
    <text evidence="1">Binds 1 zinc or iron ion per subunit.</text>
</comment>
<comment type="pathway">
    <text evidence="1">Amino-acid degradation; L-histidine degradation into L-glutamate; N-formimidoyl-L-glutamate from L-histidine: step 3/3.</text>
</comment>
<comment type="subcellular location">
    <subcellularLocation>
        <location evidence="1">Cytoplasm</location>
    </subcellularLocation>
</comment>
<comment type="similarity">
    <text evidence="1">Belongs to the metallo-dependent hydrolases superfamily. HutI family.</text>
</comment>
<protein>
    <recommendedName>
        <fullName evidence="1">Imidazolonepropionase</fullName>
        <ecNumber evidence="1">3.5.2.7</ecNumber>
    </recommendedName>
    <alternativeName>
        <fullName evidence="1">Imidazolone-5-propionate hydrolase</fullName>
    </alternativeName>
</protein>